<evidence type="ECO:0000250" key="1"/>
<evidence type="ECO:0000255" key="2"/>
<evidence type="ECO:0000305" key="3"/>
<gene>
    <name type="primary">TSPAN6</name>
</gene>
<feature type="chain" id="PRO_0000247133" description="Tetraspanin-6">
    <location>
        <begin position="1"/>
        <end position="245"/>
    </location>
</feature>
<feature type="topological domain" description="Cytoplasmic" evidence="2">
    <location>
        <begin position="1"/>
        <end position="19"/>
    </location>
</feature>
<feature type="transmembrane region" description="Helical" evidence="2">
    <location>
        <begin position="20"/>
        <end position="40"/>
    </location>
</feature>
<feature type="topological domain" description="Extracellular" evidence="2">
    <location>
        <begin position="41"/>
        <end position="59"/>
    </location>
</feature>
<feature type="transmembrane region" description="Helical" evidence="2">
    <location>
        <begin position="60"/>
        <end position="80"/>
    </location>
</feature>
<feature type="topological domain" description="Cytoplasmic" evidence="2">
    <location>
        <begin position="81"/>
        <end position="93"/>
    </location>
</feature>
<feature type="transmembrane region" description="Helical" evidence="2">
    <location>
        <begin position="94"/>
        <end position="114"/>
    </location>
</feature>
<feature type="topological domain" description="Extracellular" evidence="2">
    <location>
        <begin position="115"/>
        <end position="208"/>
    </location>
</feature>
<feature type="transmembrane region" description="Helical" evidence="2">
    <location>
        <begin position="209"/>
        <end position="229"/>
    </location>
</feature>
<feature type="topological domain" description="Cytoplasmic" evidence="2">
    <location>
        <begin position="230"/>
        <end position="245"/>
    </location>
</feature>
<feature type="glycosylation site" description="N-linked (GlcNAc...) asparagine" evidence="2">
    <location>
        <position position="134"/>
    </location>
</feature>
<proteinExistence type="evidence at transcript level"/>
<sequence>MASPSRRLQTKPVITCFKSVLLIYTFIFWITGVILLAVGIWGKVSLENYFSLLNEKATNVPFVLIGTGTVIILLGTFGCFATCRASAWMLKLYAMFLTLIFLVELVAAIIGFVFRHEIKNSLKNNYEKALKQYNATGDYRSDAVDKIQSMLHCCGVTNYRDWKDTNYYSEKGFPESCCKLEDCSPQRDADKVNNEGCFIMVMTIIESEMGVVAGISFGVACFQLIGIFLAYCLSRAITNNQYEIV</sequence>
<name>TSN6_BOVIN</name>
<keyword id="KW-0325">Glycoprotein</keyword>
<keyword id="KW-0472">Membrane</keyword>
<keyword id="KW-1185">Reference proteome</keyword>
<keyword id="KW-0812">Transmembrane</keyword>
<keyword id="KW-1133">Transmembrane helix</keyword>
<organism>
    <name type="scientific">Bos taurus</name>
    <name type="common">Bovine</name>
    <dbReference type="NCBI Taxonomy" id="9913"/>
    <lineage>
        <taxon>Eukaryota</taxon>
        <taxon>Metazoa</taxon>
        <taxon>Chordata</taxon>
        <taxon>Craniata</taxon>
        <taxon>Vertebrata</taxon>
        <taxon>Euteleostomi</taxon>
        <taxon>Mammalia</taxon>
        <taxon>Eutheria</taxon>
        <taxon>Laurasiatheria</taxon>
        <taxon>Artiodactyla</taxon>
        <taxon>Ruminantia</taxon>
        <taxon>Pecora</taxon>
        <taxon>Bovidae</taxon>
        <taxon>Bovinae</taxon>
        <taxon>Bos</taxon>
    </lineage>
</organism>
<dbReference type="EMBL" id="BC109924">
    <property type="protein sequence ID" value="AAI09925.1"/>
    <property type="molecule type" value="mRNA"/>
</dbReference>
<dbReference type="RefSeq" id="NP_001033198.1">
    <property type="nucleotide sequence ID" value="NM_001038109.1"/>
</dbReference>
<dbReference type="RefSeq" id="XP_005227812.1">
    <property type="nucleotide sequence ID" value="XM_005227755.3"/>
</dbReference>
<dbReference type="RefSeq" id="XP_010819934.1">
    <property type="nucleotide sequence ID" value="XM_010821632.2"/>
</dbReference>
<dbReference type="SMR" id="Q32KU6"/>
<dbReference type="FunCoup" id="Q32KU6">
    <property type="interactions" value="93"/>
</dbReference>
<dbReference type="STRING" id="9913.ENSBTAP00000064048"/>
<dbReference type="GlyCosmos" id="Q32KU6">
    <property type="glycosylation" value="1 site, No reported glycans"/>
</dbReference>
<dbReference type="GlyGen" id="Q32KU6">
    <property type="glycosylation" value="1 site"/>
</dbReference>
<dbReference type="PaxDb" id="9913-ENSBTAP00000056037"/>
<dbReference type="Ensembl" id="ENSBTAT00000063874.2">
    <property type="protein sequence ID" value="ENSBTAP00000056037.1"/>
    <property type="gene ID" value="ENSBTAG00000045550.3"/>
</dbReference>
<dbReference type="GeneID" id="514741"/>
<dbReference type="KEGG" id="bta:514741"/>
<dbReference type="CTD" id="7105"/>
<dbReference type="VEuPathDB" id="HostDB:ENSBTAG00000045550"/>
<dbReference type="VGNC" id="VGNC:36441">
    <property type="gene designation" value="TSPAN6"/>
</dbReference>
<dbReference type="eggNOG" id="KOG3882">
    <property type="taxonomic scope" value="Eukaryota"/>
</dbReference>
<dbReference type="GeneTree" id="ENSGT00940000159092"/>
<dbReference type="HOGENOM" id="CLU_055524_3_0_1"/>
<dbReference type="InParanoid" id="Q32KU6"/>
<dbReference type="OMA" id="YRNWEDT"/>
<dbReference type="OrthoDB" id="9972904at2759"/>
<dbReference type="TreeFam" id="TF352891"/>
<dbReference type="Proteomes" id="UP000009136">
    <property type="component" value="Chromosome X"/>
</dbReference>
<dbReference type="Bgee" id="ENSBTAG00000045550">
    <property type="expression patterns" value="Expressed in semen and 106 other cell types or tissues"/>
</dbReference>
<dbReference type="GO" id="GO:0005886">
    <property type="term" value="C:plasma membrane"/>
    <property type="evidence" value="ECO:0000318"/>
    <property type="project" value="GO_Central"/>
</dbReference>
<dbReference type="GO" id="GO:0043124">
    <property type="term" value="P:negative regulation of canonical NF-kappaB signal transduction"/>
    <property type="evidence" value="ECO:0007669"/>
    <property type="project" value="Ensembl"/>
</dbReference>
<dbReference type="GO" id="GO:0039532">
    <property type="term" value="P:negative regulation of cytoplasmic pattern recognition receptor signaling pathway"/>
    <property type="evidence" value="ECO:0007669"/>
    <property type="project" value="Ensembl"/>
</dbReference>
<dbReference type="CDD" id="cd03161">
    <property type="entry name" value="TM4SF2_6_like_LEL"/>
    <property type="match status" value="1"/>
</dbReference>
<dbReference type="FunFam" id="1.10.1450.10:FF:000013">
    <property type="entry name" value="Tetraspanin"/>
    <property type="match status" value="1"/>
</dbReference>
<dbReference type="Gene3D" id="1.10.1450.10">
    <property type="entry name" value="Tetraspanin"/>
    <property type="match status" value="1"/>
</dbReference>
<dbReference type="InterPro" id="IPR018499">
    <property type="entry name" value="Tetraspanin/Peripherin"/>
</dbReference>
<dbReference type="InterPro" id="IPR000301">
    <property type="entry name" value="Tetraspanin_animals"/>
</dbReference>
<dbReference type="InterPro" id="IPR018503">
    <property type="entry name" value="Tetraspanin_CS"/>
</dbReference>
<dbReference type="InterPro" id="IPR008952">
    <property type="entry name" value="Tetraspanin_EC2_sf"/>
</dbReference>
<dbReference type="InterPro" id="IPR048232">
    <property type="entry name" value="TSN6/7_LEL"/>
</dbReference>
<dbReference type="PANTHER" id="PTHR19282">
    <property type="entry name" value="TETRASPANIN"/>
    <property type="match status" value="1"/>
</dbReference>
<dbReference type="PANTHER" id="PTHR19282:SF169">
    <property type="entry name" value="TETRASPANIN-6"/>
    <property type="match status" value="1"/>
</dbReference>
<dbReference type="Pfam" id="PF00335">
    <property type="entry name" value="Tetraspanin"/>
    <property type="match status" value="1"/>
</dbReference>
<dbReference type="PIRSF" id="PIRSF002419">
    <property type="entry name" value="Tetraspanin"/>
    <property type="match status" value="1"/>
</dbReference>
<dbReference type="PRINTS" id="PR00259">
    <property type="entry name" value="TMFOUR"/>
</dbReference>
<dbReference type="SUPFAM" id="SSF48652">
    <property type="entry name" value="Tetraspanin"/>
    <property type="match status" value="1"/>
</dbReference>
<dbReference type="PROSITE" id="PS00421">
    <property type="entry name" value="TM4_1"/>
    <property type="match status" value="1"/>
</dbReference>
<accession>Q32KU6</accession>
<reference key="1">
    <citation type="submission" date="2005-11" db="EMBL/GenBank/DDBJ databases">
        <authorList>
            <consortium name="NIH - Mammalian Gene Collection (MGC) project"/>
        </authorList>
    </citation>
    <scope>NUCLEOTIDE SEQUENCE [LARGE SCALE MRNA]</scope>
    <source>
        <strain>Crossbred X Angus</strain>
        <tissue>Liver</tissue>
    </source>
</reference>
<comment type="subcellular location">
    <subcellularLocation>
        <location evidence="1">Membrane</location>
        <topology evidence="1">Multi-pass membrane protein</topology>
    </subcellularLocation>
</comment>
<comment type="similarity">
    <text evidence="3">Belongs to the tetraspanin (TM4SF) family.</text>
</comment>
<protein>
    <recommendedName>
        <fullName>Tetraspanin-6</fullName>
        <shortName>Tspan-6</shortName>
    </recommendedName>
</protein>